<dbReference type="EMBL" id="AAHK01000075">
    <property type="protein sequence ID" value="EAN97975.1"/>
    <property type="molecule type" value="Genomic_DNA"/>
</dbReference>
<dbReference type="RefSeq" id="XP_819826.1">
    <property type="nucleotide sequence ID" value="XM_814733.1"/>
</dbReference>
<dbReference type="PDB" id="5T5H">
    <property type="method" value="EM"/>
    <property type="resolution" value="2.54 A"/>
    <property type="chains" value="I=2-193"/>
</dbReference>
<dbReference type="PDBsum" id="5T5H"/>
<dbReference type="EMDB" id="EMD-8361"/>
<dbReference type="SMR" id="Q4DZP2"/>
<dbReference type="FunCoup" id="Q4DZP2">
    <property type="interactions" value="611"/>
</dbReference>
<dbReference type="IntAct" id="Q4DZP2">
    <property type="interactions" value="1"/>
</dbReference>
<dbReference type="STRING" id="353153.Q4DZP2"/>
<dbReference type="PaxDb" id="353153-Q4DZP2"/>
<dbReference type="EnsemblProtists" id="EAN97975">
    <property type="protein sequence ID" value="EAN97975"/>
    <property type="gene ID" value="Tc00.1047053504147.20"/>
</dbReference>
<dbReference type="GeneID" id="3552354"/>
<dbReference type="KEGG" id="tcr:504147.20"/>
<dbReference type="eggNOG" id="KOG1714">
    <property type="taxonomic scope" value="Eukaryota"/>
</dbReference>
<dbReference type="InParanoid" id="Q4DZP2"/>
<dbReference type="OMA" id="IDICHKN"/>
<dbReference type="Proteomes" id="UP000002296">
    <property type="component" value="Unassembled WGS sequence"/>
</dbReference>
<dbReference type="GO" id="GO:0022625">
    <property type="term" value="C:cytosolic large ribosomal subunit"/>
    <property type="evidence" value="ECO:0007669"/>
    <property type="project" value="TreeGrafter"/>
</dbReference>
<dbReference type="GO" id="GO:0003723">
    <property type="term" value="F:RNA binding"/>
    <property type="evidence" value="ECO:0007669"/>
    <property type="project" value="TreeGrafter"/>
</dbReference>
<dbReference type="GO" id="GO:0003735">
    <property type="term" value="F:structural constituent of ribosome"/>
    <property type="evidence" value="ECO:0007669"/>
    <property type="project" value="InterPro"/>
</dbReference>
<dbReference type="GO" id="GO:0006412">
    <property type="term" value="P:translation"/>
    <property type="evidence" value="ECO:0007669"/>
    <property type="project" value="InterPro"/>
</dbReference>
<dbReference type="FunFam" id="3.100.10.10:FF:000001">
    <property type="entry name" value="60S ribosomal protein L18"/>
    <property type="match status" value="1"/>
</dbReference>
<dbReference type="Gene3D" id="3.100.10.10">
    <property type="match status" value="1"/>
</dbReference>
<dbReference type="InterPro" id="IPR000039">
    <property type="entry name" value="Ribosomal_eL18"/>
</dbReference>
<dbReference type="InterPro" id="IPR021131">
    <property type="entry name" value="Ribosomal_uL15/eL18"/>
</dbReference>
<dbReference type="InterPro" id="IPR036227">
    <property type="entry name" value="Ribosomal_uL15/eL18_sf"/>
</dbReference>
<dbReference type="PANTHER" id="PTHR10934">
    <property type="entry name" value="60S RIBOSOMAL PROTEIN L18"/>
    <property type="match status" value="1"/>
</dbReference>
<dbReference type="PANTHER" id="PTHR10934:SF2">
    <property type="entry name" value="LARGE RIBOSOMAL SUBUNIT PROTEIN EL18"/>
    <property type="match status" value="1"/>
</dbReference>
<dbReference type="Pfam" id="PF17135">
    <property type="entry name" value="Ribosomal_L18"/>
    <property type="match status" value="1"/>
</dbReference>
<dbReference type="SUPFAM" id="SSF52080">
    <property type="entry name" value="Ribosomal proteins L15p and L18e"/>
    <property type="match status" value="1"/>
</dbReference>
<proteinExistence type="evidence at protein level"/>
<keyword id="KW-0002">3D-structure</keyword>
<keyword id="KW-0963">Cytoplasm</keyword>
<keyword id="KW-1185">Reference proteome</keyword>
<keyword id="KW-0687">Ribonucleoprotein</keyword>
<keyword id="KW-0689">Ribosomal protein</keyword>
<comment type="subcellular location">
    <subcellularLocation>
        <location evidence="1">Cytoplasm</location>
    </subcellularLocation>
</comment>
<comment type="similarity">
    <text evidence="3">Belongs to the eukaryotic ribosomal protein eL18 family.</text>
</comment>
<protein>
    <recommendedName>
        <fullName evidence="3">Large ribosomal subunit protein eL18</fullName>
    </recommendedName>
    <alternativeName>
        <fullName>60S ribosomal protein L18</fullName>
    </alternativeName>
</protein>
<reference key="1">
    <citation type="journal article" date="2005" name="Science">
        <title>The genome sequence of Trypanosoma cruzi, etiologic agent of Chagas disease.</title>
        <authorList>
            <person name="El-Sayed N.M.A."/>
            <person name="Myler P.J."/>
            <person name="Bartholomeu D.C."/>
            <person name="Nilsson D."/>
            <person name="Aggarwal G."/>
            <person name="Tran A.-N."/>
            <person name="Ghedin E."/>
            <person name="Worthey E.A."/>
            <person name="Delcher A.L."/>
            <person name="Blandin G."/>
            <person name="Westenberger S.J."/>
            <person name="Caler E."/>
            <person name="Cerqueira G.C."/>
            <person name="Branche C."/>
            <person name="Haas B."/>
            <person name="Anupama A."/>
            <person name="Arner E."/>
            <person name="Aslund L."/>
            <person name="Attipoe P."/>
            <person name="Bontempi E."/>
            <person name="Bringaud F."/>
            <person name="Burton P."/>
            <person name="Cadag E."/>
            <person name="Campbell D.A."/>
            <person name="Carrington M."/>
            <person name="Crabtree J."/>
            <person name="Darban H."/>
            <person name="da Silveira J.F."/>
            <person name="de Jong P."/>
            <person name="Edwards K."/>
            <person name="Englund P.T."/>
            <person name="Fazelina G."/>
            <person name="Feldblyum T."/>
            <person name="Ferella M."/>
            <person name="Frasch A.C."/>
            <person name="Gull K."/>
            <person name="Horn D."/>
            <person name="Hou L."/>
            <person name="Huang Y."/>
            <person name="Kindlund E."/>
            <person name="Klingbeil M."/>
            <person name="Kluge S."/>
            <person name="Koo H."/>
            <person name="Lacerda D."/>
            <person name="Levin M.J."/>
            <person name="Lorenzi H."/>
            <person name="Louie T."/>
            <person name="Machado C.R."/>
            <person name="McCulloch R."/>
            <person name="McKenna A."/>
            <person name="Mizuno Y."/>
            <person name="Mottram J.C."/>
            <person name="Nelson S."/>
            <person name="Ochaya S."/>
            <person name="Osoegawa K."/>
            <person name="Pai G."/>
            <person name="Parsons M."/>
            <person name="Pentony M."/>
            <person name="Pettersson U."/>
            <person name="Pop M."/>
            <person name="Ramirez J.L."/>
            <person name="Rinta J."/>
            <person name="Robertson L."/>
            <person name="Salzberg S.L."/>
            <person name="Sanchez D.O."/>
            <person name="Seyler A."/>
            <person name="Sharma R."/>
            <person name="Shetty J."/>
            <person name="Simpson A.J."/>
            <person name="Sisk E."/>
            <person name="Tammi M.T."/>
            <person name="Tarleton R."/>
            <person name="Teixeira S."/>
            <person name="Van Aken S."/>
            <person name="Vogt C."/>
            <person name="Ward P.N."/>
            <person name="Wickstead B."/>
            <person name="Wortman J."/>
            <person name="White O."/>
            <person name="Fraser C.M."/>
            <person name="Stuart K.D."/>
            <person name="Andersson B."/>
        </authorList>
    </citation>
    <scope>NUCLEOTIDE SEQUENCE [LARGE SCALE GENOMIC DNA]</scope>
    <source>
        <strain>CL Brener</strain>
    </source>
</reference>
<gene>
    <name type="primary">RPL18</name>
    <name type="ORF">Tc00.1047053504147.20</name>
</gene>
<name>RL18_TRYCC</name>
<evidence type="ECO:0000250" key="1"/>
<evidence type="ECO:0000256" key="2">
    <source>
        <dbReference type="SAM" id="MobiDB-lite"/>
    </source>
</evidence>
<evidence type="ECO:0000305" key="3"/>
<sequence length="193" mass="21677">MGVDLTGVQKKKRVVRHHTYSTNPYIKLLIKLYKFLAQRTNSAFNKLVHQRLLKSRSNRAPISLSRIAVCMKRKSVWLEKGKKAPIAVIVGDVLDDVRMARIPALRVCALRFSKSARERITGAGGECLTFDQLAMVAPTGKNTFLLRGRKSGRESVKHFGAAGVPGSHAKPFTSNRGKERQRSSARRRAFRHK</sequence>
<accession>Q4DZP2</accession>
<feature type="chain" id="PRO_0000291638" description="Large ribosomal subunit protein eL18">
    <location>
        <begin position="1"/>
        <end position="193"/>
    </location>
</feature>
<feature type="region of interest" description="Disordered" evidence="2">
    <location>
        <begin position="158"/>
        <end position="193"/>
    </location>
</feature>
<feature type="compositionally biased region" description="Basic residues" evidence="2">
    <location>
        <begin position="183"/>
        <end position="193"/>
    </location>
</feature>
<organism>
    <name type="scientific">Trypanosoma cruzi (strain CL Brener)</name>
    <dbReference type="NCBI Taxonomy" id="353153"/>
    <lineage>
        <taxon>Eukaryota</taxon>
        <taxon>Discoba</taxon>
        <taxon>Euglenozoa</taxon>
        <taxon>Kinetoplastea</taxon>
        <taxon>Metakinetoplastina</taxon>
        <taxon>Trypanosomatida</taxon>
        <taxon>Trypanosomatidae</taxon>
        <taxon>Trypanosoma</taxon>
        <taxon>Schizotrypanum</taxon>
    </lineage>
</organism>